<keyword id="KW-0007">Acetylation</keyword>
<keyword id="KW-1003">Cell membrane</keyword>
<keyword id="KW-0963">Cytoplasm</keyword>
<keyword id="KW-1015">Disulfide bond</keyword>
<keyword id="KW-0967">Endosome</keyword>
<keyword id="KW-0290">Folate-binding</keyword>
<keyword id="KW-0325">Glycoprotein</keyword>
<keyword id="KW-0472">Membrane</keyword>
<keyword id="KW-0597">Phosphoprotein</keyword>
<keyword id="KW-1185">Reference proteome</keyword>
<keyword id="KW-0769">Symport</keyword>
<keyword id="KW-0812">Transmembrane</keyword>
<keyword id="KW-1133">Transmembrane helix</keyword>
<keyword id="KW-0813">Transport</keyword>
<gene>
    <name evidence="3" type="primary">SLC46A1</name>
    <name evidence="6" type="synonym">HCP1</name>
    <name evidence="3" type="synonym">PCFT</name>
</gene>
<accession>Q05B81</accession>
<accession>A1L0R5</accession>
<accession>A1L547</accession>
<feature type="chain" id="PRO_0000291649" description="Proton-coupled folate transporter">
    <location>
        <begin position="1"/>
        <end position="459"/>
    </location>
</feature>
<feature type="topological domain" description="Cytoplasmic" evidence="1">
    <location>
        <begin position="1"/>
        <end position="25"/>
    </location>
</feature>
<feature type="transmembrane region" description="Helical; Name=TM1" evidence="1">
    <location>
        <begin position="26"/>
        <end position="44"/>
    </location>
</feature>
<feature type="topological domain" description="Extracellular" evidence="1">
    <location>
        <begin position="45"/>
        <end position="82"/>
    </location>
</feature>
<feature type="transmembrane region" description="Helical; Name=TM2" evidence="1">
    <location>
        <begin position="83"/>
        <end position="108"/>
    </location>
</feature>
<feature type="topological domain" description="Cytoplasmic" evidence="1">
    <location>
        <begin position="109"/>
        <end position="112"/>
    </location>
</feature>
<feature type="transmembrane region" description="Helical; Name=TM3" evidence="1">
    <location>
        <begin position="113"/>
        <end position="135"/>
    </location>
</feature>
<feature type="topological domain" description="Extracellular" evidence="1">
    <location>
        <begin position="136"/>
        <end position="140"/>
    </location>
</feature>
<feature type="transmembrane region" description="Helical; Name=TM4" evidence="1">
    <location>
        <begin position="141"/>
        <end position="154"/>
    </location>
</feature>
<feature type="topological domain" description="Cytoplasmic" evidence="1">
    <location>
        <begin position="155"/>
        <end position="177"/>
    </location>
</feature>
<feature type="transmembrane region" description="Helical; Name=TM5" evidence="1">
    <location>
        <begin position="178"/>
        <end position="203"/>
    </location>
</feature>
<feature type="topological domain" description="Extracellular" evidence="1">
    <location>
        <begin position="204"/>
        <end position="208"/>
    </location>
</feature>
<feature type="transmembrane region" description="Helical; Name=TM6" evidence="1">
    <location>
        <begin position="209"/>
        <end position="227"/>
    </location>
</feature>
<feature type="topological domain" description="Cytoplasmic" evidence="1">
    <location>
        <begin position="228"/>
        <end position="266"/>
    </location>
</feature>
<feature type="transmembrane region" description="Helical; Name=TM7" evidence="1">
    <location>
        <begin position="267"/>
        <end position="289"/>
    </location>
</feature>
<feature type="topological domain" description="Extracellular" evidence="1">
    <location>
        <begin position="290"/>
        <end position="302"/>
    </location>
</feature>
<feature type="transmembrane region" description="Helical; Name=TM8" evidence="1">
    <location>
        <begin position="303"/>
        <end position="325"/>
    </location>
</feature>
<feature type="topological domain" description="Cytoplasmic" evidence="1">
    <location>
        <begin position="326"/>
        <end position="331"/>
    </location>
</feature>
<feature type="transmembrane region" description="Helical; Name=TM9" evidence="1">
    <location>
        <begin position="332"/>
        <end position="351"/>
    </location>
</feature>
<feature type="topological domain" description="Extracellular" evidence="1">
    <location>
        <begin position="352"/>
        <end position="355"/>
    </location>
</feature>
<feature type="transmembrane region" description="Helical; Name=TM10" evidence="1">
    <location>
        <begin position="356"/>
        <end position="376"/>
    </location>
</feature>
<feature type="topological domain" description="Cytoplasmic" evidence="1">
    <location>
        <begin position="377"/>
        <end position="388"/>
    </location>
</feature>
<feature type="transmembrane region" description="Helical; Name=TM11" evidence="1">
    <location>
        <begin position="389"/>
        <end position="414"/>
    </location>
</feature>
<feature type="topological domain" description="Extracellular" evidence="1">
    <location>
        <begin position="415"/>
        <end position="422"/>
    </location>
</feature>
<feature type="transmembrane region" description="Helical; Name=TM12" evidence="1">
    <location>
        <begin position="423"/>
        <end position="441"/>
    </location>
</feature>
<feature type="topological domain" description="Cytoplasmic" evidence="1">
    <location>
        <begin position="442"/>
        <end position="459"/>
    </location>
</feature>
<feature type="binding site" description="reversibly protonated residue during proton transport" evidence="3">
    <location>
        <position position="156"/>
    </location>
    <ligand>
        <name>H(+)</name>
        <dbReference type="ChEBI" id="CHEBI:15378"/>
    </ligand>
</feature>
<feature type="binding site" description="reversibly protonated residue during proton transport" evidence="3">
    <location>
        <position position="185"/>
    </location>
    <ligand>
        <name>H(+)</name>
        <dbReference type="ChEBI" id="CHEBI:15378"/>
    </ligand>
</feature>
<feature type="binding site" description="reversibly protonated residue during proton transport" evidence="3">
    <location>
        <position position="281"/>
    </location>
    <ligand>
        <name>H(+)</name>
        <dbReference type="ChEBI" id="CHEBI:15378"/>
    </ligand>
</feature>
<feature type="modified residue" description="N-acetylmethionine" evidence="3">
    <location>
        <position position="1"/>
    </location>
</feature>
<feature type="modified residue" description="Phosphoserine" evidence="3">
    <location>
        <position position="458"/>
    </location>
</feature>
<feature type="glycosylation site" description="N-linked (GlcNAc...) asparagine" evidence="4">
    <location>
        <position position="58"/>
    </location>
</feature>
<feature type="glycosylation site" description="N-linked (GlcNAc...) asparagine" evidence="4">
    <location>
        <position position="68"/>
    </location>
</feature>
<feature type="disulfide bond" evidence="1">
    <location>
        <begin position="66"/>
        <end position="298"/>
    </location>
</feature>
<feature type="sequence conflict" description="In Ref. 1; AAY45892." evidence="7" ref="1">
    <original>E</original>
    <variation>K</variation>
    <location>
        <position position="2"/>
    </location>
</feature>
<feature type="sequence conflict" description="In Ref. 1; AAY45892." evidence="7" ref="1">
    <original>P</original>
    <variation>S</variation>
    <location>
        <position position="115"/>
    </location>
</feature>
<feature type="sequence conflict" description="In Ref. 1; AAY45892 and 3; ABM06094." evidence="7" ref="1 3">
    <original>A</original>
    <variation>T</variation>
    <location>
        <position position="227"/>
    </location>
</feature>
<feature type="sequence conflict" description="In Ref. 1; AAY45892." evidence="7" ref="1">
    <original>V</original>
    <variation>I</variation>
    <location>
        <position position="251"/>
    </location>
</feature>
<feature type="sequence conflict" description="In Ref. 1; AAY45892." evidence="7" ref="1">
    <original>Q</original>
    <variation>H</variation>
    <location>
        <position position="388"/>
    </location>
</feature>
<feature type="sequence conflict" description="In Ref. 1; AAY45892 and 3; ABM06094." evidence="7" ref="1 3">
    <original>A</original>
    <variation>G</variation>
    <location>
        <position position="429"/>
    </location>
</feature>
<organism>
    <name type="scientific">Bos taurus</name>
    <name type="common">Bovine</name>
    <dbReference type="NCBI Taxonomy" id="9913"/>
    <lineage>
        <taxon>Eukaryota</taxon>
        <taxon>Metazoa</taxon>
        <taxon>Chordata</taxon>
        <taxon>Craniata</taxon>
        <taxon>Vertebrata</taxon>
        <taxon>Euteleostomi</taxon>
        <taxon>Mammalia</taxon>
        <taxon>Eutheria</taxon>
        <taxon>Laurasiatheria</taxon>
        <taxon>Artiodactyla</taxon>
        <taxon>Ruminantia</taxon>
        <taxon>Pecora</taxon>
        <taxon>Bovidae</taxon>
        <taxon>Bovinae</taxon>
        <taxon>Bos</taxon>
    </lineage>
</organism>
<sequence>MEGRANSPGEPRAWPTRSVLCRGCVEPLVFLANFALVLQGPVTTQYLWHRFSADLGYNGTRHRDSCSNHSVDPIAQEVETLTSHWTLYMNVGGFLVGLFSSTLLGAWSDCVGRRPLLVLASLGLLLQTVLSIFVVQLHLHIGYLVLGRILCALLGDFSGLLAASFASVADVSSSRTRTIRMALLEACIGVAGMLASFIGGFLLQEQVYVNPFWLALAVLTVMTLYAAFCFGETVKERTPTRLFTLRHHRSVIQLYVTQAPEKSRKHLALYSLAIFVMITVHLGAQDILTLYELSAPLCWDSRLISYGSAAQQLPYLTSLLGLRLLQYCLADTWVAEIGLVFNILGMMVFAFATITPLMFTGYGLLFLSLVVTPIIRAKLSRLVRQSEQGALFSALACVNGLAMLMASGIFNSLYPATLNLMKGFPFLLAAGLLFIPAILMGILERDNHCPEFQEFSQSP</sequence>
<protein>
    <recommendedName>
        <fullName evidence="3">Proton-coupled folate transporter</fullName>
    </recommendedName>
    <alternativeName>
        <fullName evidence="6">Heme carrier protein 1</fullName>
    </alternativeName>
    <alternativeName>
        <fullName evidence="7">Solute carrier family 46 member 1</fullName>
    </alternativeName>
</protein>
<comment type="function">
    <text evidence="3 5">Proton-coupled folate symporter that mediates folate absorption using an H(+) gradient as a driving force (By similarity). Involved in the intestinal absorption of folates at the brush-border membrane of the proximal jejunum, and the transport from blood to cerebrospinal fluid across the choroid plexus (By similarity). Functions at acidic pH via alternate outward- and inward-open conformation states (By similarity). Protonation of residues in the outward open state primes the protein for transport (By similarity). Binding of folate promotes breaking of salt bridge network and subsequent closure of the extracellular gate, leading to the inward-open state and release of protons and folate (By similarity). Also able to transport antifolate drugs, such as methotrexate and pemetrexed (By similarity). Involved in FOLR1-mediated endocytosis by serving as a route of export of folates from acidified endosomes (By similarity). Also acts as a lower-affinity, pH-independent heme carrier protein and constitutes the main importer of heme in the intestine (By similarity). Imports heme in the retina and retinal pigment epithelium, in neurons of the hippocampus, in hepatocytes and in the renal epithelial cells (PubMed:17335806). Hence, participates in the trafficking of heme and increases intracellular iron content (By similarity).</text>
</comment>
<comment type="catalytic activity">
    <reaction evidence="3">
        <text>folate(in) + H(+)(in) = folate(out) + H(+)(out)</text>
        <dbReference type="Rhea" id="RHEA:70159"/>
        <dbReference type="ChEBI" id="CHEBI:15378"/>
        <dbReference type="ChEBI" id="CHEBI:62501"/>
    </reaction>
</comment>
<comment type="catalytic activity">
    <reaction evidence="2">
        <text>(6S)-5-methyl-5,6,7,8-tetrahydrofolate(in) + H(+)(in) = (6S)-5-methyl-5,6,7,8-tetrahydrofolate(out) + H(+)(out)</text>
        <dbReference type="Rhea" id="RHEA:70167"/>
        <dbReference type="ChEBI" id="CHEBI:15378"/>
        <dbReference type="ChEBI" id="CHEBI:18608"/>
    </reaction>
</comment>
<comment type="catalytic activity">
    <reaction evidence="3">
        <text>methotrexate(in) + H(+)(in) = methotrexate(out) + H(+)(out)</text>
        <dbReference type="Rhea" id="RHEA:70163"/>
        <dbReference type="ChEBI" id="CHEBI:15378"/>
        <dbReference type="ChEBI" id="CHEBI:50681"/>
    </reaction>
</comment>
<comment type="catalytic activity">
    <reaction evidence="3">
        <text>pemetrexed(in) + H(+)(in) = pemetrexed(out) + H(+)(out)</text>
        <dbReference type="Rhea" id="RHEA:70171"/>
        <dbReference type="ChEBI" id="CHEBI:15378"/>
        <dbReference type="ChEBI" id="CHEBI:63724"/>
    </reaction>
</comment>
<comment type="subunit">
    <text evidence="3">Monomer.</text>
</comment>
<comment type="subcellular location">
    <subcellularLocation>
        <location evidence="3">Cell membrane</location>
        <topology evidence="4">Multi-pass membrane protein</topology>
    </subcellularLocation>
    <subcellularLocation>
        <location evidence="5">Apical cell membrane</location>
        <topology evidence="4">Multi-pass membrane protein</topology>
    </subcellularLocation>
    <subcellularLocation>
        <location evidence="3">Basolateral cell membrane</location>
        <topology evidence="4">Multi-pass membrane protein</topology>
    </subcellularLocation>
    <subcellularLocation>
        <location evidence="3">Endosome membrane</location>
        <topology evidence="4">Multi-pass membrane protein</topology>
    </subcellularLocation>
    <subcellularLocation>
        <location evidence="2">Cytoplasm</location>
    </subcellularLocation>
    <text evidence="2">Localizes to the apical membrane of intestinal cells in iron-deficient cells, while it resides in the cytoplasm in iron-replete cells (By similarity). Localizes to the basolateral membrane of choroid plexus (By similarity).</text>
</comment>
<comment type="tissue specificity">
    <text evidence="5">Expressed in retina and retinal pigment epithelium.</text>
</comment>
<comment type="similarity">
    <text evidence="7">Belongs to the major facilitator superfamily. SLC46A family.</text>
</comment>
<comment type="sequence caution" evidence="7">
    <conflict type="erroneous initiation">
        <sequence resource="EMBL-CDS" id="ABM06094"/>
    </conflict>
</comment>
<reference key="1">
    <citation type="journal article" date="2007" name="Exp. Cell Res.">
        <title>Heme carrier protein 1 (HCP1) expression and functional analysis in the retina and retinal pigment epithelium.</title>
        <authorList>
            <person name="Sharma S."/>
            <person name="Dimasi D."/>
            <person name="Broeer S."/>
            <person name="Kumar R."/>
            <person name="Della N.G."/>
        </authorList>
    </citation>
    <scope>NUCLEOTIDE SEQUENCE [MRNA]</scope>
    <scope>FUNCTION</scope>
    <scope>SUBCELLULAR LOCATION</scope>
    <scope>TISSUE SPECIFICITY</scope>
    <source>
        <tissue>Retinal pigment epithelium</tissue>
    </source>
</reference>
<reference key="2">
    <citation type="submission" date="2006-08" db="EMBL/GenBank/DDBJ databases">
        <authorList>
            <consortium name="NIH - Mammalian Gene Collection (MGC) project"/>
        </authorList>
    </citation>
    <scope>NUCLEOTIDE SEQUENCE [LARGE SCALE MRNA]</scope>
    <source>
        <strain>Hereford</strain>
        <tissue>Fetal skin</tissue>
    </source>
</reference>
<reference key="3">
    <citation type="journal article" date="2005" name="BMC Genomics">
        <title>Characterization of 954 bovine full-CDS cDNA sequences.</title>
        <authorList>
            <person name="Harhay G.P."/>
            <person name="Sonstegard T.S."/>
            <person name="Keele J.W."/>
            <person name="Heaton M.P."/>
            <person name="Clawson M.L."/>
            <person name="Snelling W.M."/>
            <person name="Wiedmann R.T."/>
            <person name="Van Tassell C.P."/>
            <person name="Smith T.P.L."/>
        </authorList>
    </citation>
    <scope>NUCLEOTIDE SEQUENCE [LARGE SCALE MRNA] OF 5-459</scope>
</reference>
<name>PCFT_BOVIN</name>
<proteinExistence type="evidence at transcript level"/>
<dbReference type="EMBL" id="AY999968">
    <property type="protein sequence ID" value="AAY45892.1"/>
    <property type="molecule type" value="mRNA"/>
</dbReference>
<dbReference type="EMBL" id="BC122640">
    <property type="protein sequence ID" value="AAI22641.1"/>
    <property type="molecule type" value="mRNA"/>
</dbReference>
<dbReference type="EMBL" id="BT029834">
    <property type="protein sequence ID" value="ABM06094.1"/>
    <property type="status" value="ALT_INIT"/>
    <property type="molecule type" value="mRNA"/>
</dbReference>
<dbReference type="RefSeq" id="NP_001073053.1">
    <property type="nucleotide sequence ID" value="NM_001079585.1"/>
</dbReference>
<dbReference type="SMR" id="Q05B81"/>
<dbReference type="FunCoup" id="Q05B81">
    <property type="interactions" value="344"/>
</dbReference>
<dbReference type="STRING" id="9913.ENSBTAP00000035161"/>
<dbReference type="GlyCosmos" id="Q05B81">
    <property type="glycosylation" value="2 sites, No reported glycans"/>
</dbReference>
<dbReference type="GlyGen" id="Q05B81">
    <property type="glycosylation" value="2 sites"/>
</dbReference>
<dbReference type="PaxDb" id="9913-ENSBTAP00000035161"/>
<dbReference type="Ensembl" id="ENSBTAT00000035283.6">
    <property type="protein sequence ID" value="ENSBTAP00000035161.4"/>
    <property type="gene ID" value="ENSBTAG00000002817.7"/>
</dbReference>
<dbReference type="GeneID" id="511097"/>
<dbReference type="KEGG" id="bta:511097"/>
<dbReference type="CTD" id="113235"/>
<dbReference type="VEuPathDB" id="HostDB:ENSBTAG00000002817"/>
<dbReference type="VGNC" id="VGNC:34884">
    <property type="gene designation" value="SLC46A1"/>
</dbReference>
<dbReference type="eggNOG" id="KOG2816">
    <property type="taxonomic scope" value="Eukaryota"/>
</dbReference>
<dbReference type="GeneTree" id="ENSGT00950000183096"/>
<dbReference type="HOGENOM" id="CLU_028365_1_0_1"/>
<dbReference type="InParanoid" id="Q05B81"/>
<dbReference type="OMA" id="KRSECGN"/>
<dbReference type="OrthoDB" id="419734at2759"/>
<dbReference type="TreeFam" id="TF315701"/>
<dbReference type="Reactome" id="R-BTA-196757">
    <property type="pathway name" value="Metabolism of folate and pterines"/>
</dbReference>
<dbReference type="Reactome" id="R-BTA-917937">
    <property type="pathway name" value="Iron uptake and transport"/>
</dbReference>
<dbReference type="Reactome" id="R-BTA-9707616">
    <property type="pathway name" value="Heme signaling"/>
</dbReference>
<dbReference type="Proteomes" id="UP000009136">
    <property type="component" value="Chromosome 19"/>
</dbReference>
<dbReference type="Bgee" id="ENSBTAG00000002817">
    <property type="expression patterns" value="Expressed in duodenum and 104 other cell types or tissues"/>
</dbReference>
<dbReference type="GO" id="GO:0016324">
    <property type="term" value="C:apical plasma membrane"/>
    <property type="evidence" value="ECO:0000250"/>
    <property type="project" value="UniProtKB"/>
</dbReference>
<dbReference type="GO" id="GO:0016323">
    <property type="term" value="C:basolateral plasma membrane"/>
    <property type="evidence" value="ECO:0000250"/>
    <property type="project" value="UniProtKB"/>
</dbReference>
<dbReference type="GO" id="GO:0005737">
    <property type="term" value="C:cytoplasm"/>
    <property type="evidence" value="ECO:0000250"/>
    <property type="project" value="UniProtKB"/>
</dbReference>
<dbReference type="GO" id="GO:0005768">
    <property type="term" value="C:endosome"/>
    <property type="evidence" value="ECO:0000250"/>
    <property type="project" value="UniProtKB"/>
</dbReference>
<dbReference type="GO" id="GO:0010008">
    <property type="term" value="C:endosome membrane"/>
    <property type="evidence" value="ECO:0007669"/>
    <property type="project" value="UniProtKB-SubCell"/>
</dbReference>
<dbReference type="GO" id="GO:0005886">
    <property type="term" value="C:plasma membrane"/>
    <property type="evidence" value="ECO:0000318"/>
    <property type="project" value="GO_Central"/>
</dbReference>
<dbReference type="GO" id="GO:0005542">
    <property type="term" value="F:folic acid binding"/>
    <property type="evidence" value="ECO:0007669"/>
    <property type="project" value="UniProtKB-KW"/>
</dbReference>
<dbReference type="GO" id="GO:0008517">
    <property type="term" value="F:folic acid transmembrane transporter activity"/>
    <property type="evidence" value="ECO:0000250"/>
    <property type="project" value="UniProtKB"/>
</dbReference>
<dbReference type="GO" id="GO:0140211">
    <property type="term" value="F:folic acid:proton symporter activity"/>
    <property type="evidence" value="ECO:0007669"/>
    <property type="project" value="Ensembl"/>
</dbReference>
<dbReference type="GO" id="GO:0015232">
    <property type="term" value="F:heme transmembrane transporter activity"/>
    <property type="evidence" value="ECO:0000314"/>
    <property type="project" value="UniProtKB"/>
</dbReference>
<dbReference type="GO" id="GO:0015350">
    <property type="term" value="F:methotrexate transmembrane transporter activity"/>
    <property type="evidence" value="ECO:0000250"/>
    <property type="project" value="UniProtKB"/>
</dbReference>
<dbReference type="GO" id="GO:0015293">
    <property type="term" value="F:symporter activity"/>
    <property type="evidence" value="ECO:0000250"/>
    <property type="project" value="UniProtKB"/>
</dbReference>
<dbReference type="GO" id="GO:0022857">
    <property type="term" value="F:transmembrane transporter activity"/>
    <property type="evidence" value="ECO:0000318"/>
    <property type="project" value="GO_Central"/>
</dbReference>
<dbReference type="GO" id="GO:1904447">
    <property type="term" value="P:folate import across plasma membrane"/>
    <property type="evidence" value="ECO:0007669"/>
    <property type="project" value="Ensembl"/>
</dbReference>
<dbReference type="GO" id="GO:0015884">
    <property type="term" value="P:folic acid transport"/>
    <property type="evidence" value="ECO:0000250"/>
    <property type="project" value="UniProtKB"/>
</dbReference>
<dbReference type="GO" id="GO:0015886">
    <property type="term" value="P:heme transport"/>
    <property type="evidence" value="ECO:0000314"/>
    <property type="project" value="UniProtKB"/>
</dbReference>
<dbReference type="GO" id="GO:0046654">
    <property type="term" value="P:tetrahydrofolate biosynthetic process"/>
    <property type="evidence" value="ECO:0007669"/>
    <property type="project" value="Ensembl"/>
</dbReference>
<dbReference type="GO" id="GO:0055085">
    <property type="term" value="P:transmembrane transport"/>
    <property type="evidence" value="ECO:0000318"/>
    <property type="project" value="GO_Central"/>
</dbReference>
<dbReference type="FunFam" id="1.20.1250.20:FF:000263">
    <property type="entry name" value="Proton-coupled folate transporter isoform 1"/>
    <property type="match status" value="1"/>
</dbReference>
<dbReference type="Gene3D" id="1.20.1250.20">
    <property type="entry name" value="MFS general substrate transporter like domains"/>
    <property type="match status" value="1"/>
</dbReference>
<dbReference type="InterPro" id="IPR011701">
    <property type="entry name" value="MFS"/>
</dbReference>
<dbReference type="InterPro" id="IPR020846">
    <property type="entry name" value="MFS_dom"/>
</dbReference>
<dbReference type="InterPro" id="IPR036259">
    <property type="entry name" value="MFS_trans_sf"/>
</dbReference>
<dbReference type="InterPro" id="IPR005829">
    <property type="entry name" value="Sugar_transporter_CS"/>
</dbReference>
<dbReference type="PANTHER" id="PTHR23507:SF2">
    <property type="entry name" value="PROTON-COUPLED FOLATE TRANSPORTER"/>
    <property type="match status" value="1"/>
</dbReference>
<dbReference type="PANTHER" id="PTHR23507">
    <property type="entry name" value="ZGC:174356"/>
    <property type="match status" value="1"/>
</dbReference>
<dbReference type="Pfam" id="PF07690">
    <property type="entry name" value="MFS_1"/>
    <property type="match status" value="1"/>
</dbReference>
<dbReference type="SUPFAM" id="SSF103473">
    <property type="entry name" value="MFS general substrate transporter"/>
    <property type="match status" value="1"/>
</dbReference>
<dbReference type="PROSITE" id="PS50850">
    <property type="entry name" value="MFS"/>
    <property type="match status" value="1"/>
</dbReference>
<evidence type="ECO:0000250" key="1">
    <source>
        <dbReference type="UniProtKB" id="F1NJ67"/>
    </source>
</evidence>
<evidence type="ECO:0000250" key="2">
    <source>
        <dbReference type="UniProtKB" id="Q6PEM8"/>
    </source>
</evidence>
<evidence type="ECO:0000250" key="3">
    <source>
        <dbReference type="UniProtKB" id="Q96NT5"/>
    </source>
</evidence>
<evidence type="ECO:0000255" key="4"/>
<evidence type="ECO:0000269" key="5">
    <source>
    </source>
</evidence>
<evidence type="ECO:0000303" key="6">
    <source>
    </source>
</evidence>
<evidence type="ECO:0000305" key="7"/>